<keyword id="KW-0002">3D-structure</keyword>
<keyword id="KW-0903">Direct protein sequencing</keyword>
<keyword id="KW-1015">Disulfide bond</keyword>
<keyword id="KW-0872">Ion channel impairing toxin</keyword>
<keyword id="KW-0960">Knottin</keyword>
<keyword id="KW-0964">Secreted</keyword>
<keyword id="KW-0800">Toxin</keyword>
<organism>
    <name type="scientific">Chilobrachys guangxiensis</name>
    <name type="common">Chinese earth tiger tarantula</name>
    <name type="synonym">Chilobrachys jingzhao</name>
    <dbReference type="NCBI Taxonomy" id="278060"/>
    <lineage>
        <taxon>Eukaryota</taxon>
        <taxon>Metazoa</taxon>
        <taxon>Ecdysozoa</taxon>
        <taxon>Arthropoda</taxon>
        <taxon>Chelicerata</taxon>
        <taxon>Arachnida</taxon>
        <taxon>Araneae</taxon>
        <taxon>Mygalomorphae</taxon>
        <taxon>Theraphosidae</taxon>
        <taxon>Chilobrachys</taxon>
    </lineage>
</organism>
<comment type="function">
    <text>Probable ion channel inhibitor.</text>
</comment>
<comment type="subcellular location">
    <subcellularLocation>
        <location>Secreted</location>
    </subcellularLocation>
</comment>
<comment type="tissue specificity">
    <text>Expressed by the venom gland.</text>
</comment>
<comment type="domain">
    <text evidence="1">The presence of a 'disulfide through disulfide knot' structurally defines this protein as a knottin.</text>
</comment>
<comment type="mass spectrometry">
    <text>Monoisotopic mass.</text>
</comment>
<comment type="similarity">
    <text evidence="3">Belongs to the neurotoxin 10 (Hwtx-1) family. 50 (Jztz-F7) subfamily.</text>
</comment>
<dbReference type="PDB" id="8FD4">
    <property type="method" value="NMR"/>
    <property type="chains" value="A=1-34"/>
</dbReference>
<dbReference type="PDBsum" id="8FD4"/>
<dbReference type="SMR" id="P0CH54"/>
<dbReference type="TCDB" id="8.B.3.1.5">
    <property type="family name" value="the huwentoxin-1 (huwentoxin-1) family"/>
</dbReference>
<dbReference type="GO" id="GO:0005576">
    <property type="term" value="C:extracellular region"/>
    <property type="evidence" value="ECO:0007669"/>
    <property type="project" value="UniProtKB-SubCell"/>
</dbReference>
<dbReference type="GO" id="GO:0008200">
    <property type="term" value="F:ion channel inhibitor activity"/>
    <property type="evidence" value="ECO:0007669"/>
    <property type="project" value="InterPro"/>
</dbReference>
<dbReference type="GO" id="GO:0090729">
    <property type="term" value="F:toxin activity"/>
    <property type="evidence" value="ECO:0007669"/>
    <property type="project" value="UniProtKB-KW"/>
</dbReference>
<dbReference type="InterPro" id="IPR011696">
    <property type="entry name" value="Huwentoxin-1"/>
</dbReference>
<dbReference type="Pfam" id="PF07740">
    <property type="entry name" value="Toxin_12"/>
    <property type="match status" value="1"/>
</dbReference>
<dbReference type="SUPFAM" id="SSF57059">
    <property type="entry name" value="omega toxin-like"/>
    <property type="match status" value="1"/>
</dbReference>
<reference key="1">
    <citation type="journal article" date="2007" name="Proteomics">
        <title>Proteomic and peptidomic analysis of the venom from Chinese tarantula Chilobrachys jingzhao.</title>
        <authorList>
            <person name="Liao Z."/>
            <person name="Cao J."/>
            <person name="Li S."/>
            <person name="Yan X."/>
            <person name="Hu W."/>
            <person name="He Q."/>
            <person name="Chen J."/>
            <person name="Tang J."/>
            <person name="Xie J."/>
            <person name="Liang S."/>
        </authorList>
    </citation>
    <scope>PROTEIN SEQUENCE</scope>
    <scope>MASS SPECTROMETRY</scope>
    <source>
        <tissue>Venom</tissue>
    </source>
</reference>
<feature type="peptide" id="PRO_0000398563" description="Jingzhaotoxin F7-10.36">
    <location>
        <begin position="1"/>
        <end position="34"/>
    </location>
</feature>
<feature type="disulfide bond" evidence="1">
    <location>
        <begin position="2"/>
        <end position="17"/>
    </location>
</feature>
<feature type="disulfide bond" evidence="1">
    <location>
        <begin position="9"/>
        <end position="22"/>
    </location>
</feature>
<feature type="disulfide bond" evidence="1">
    <location>
        <begin position="16"/>
        <end position="29"/>
    </location>
</feature>
<feature type="strand" evidence="4">
    <location>
        <begin position="5"/>
        <end position="8"/>
    </location>
</feature>
<feature type="turn" evidence="4">
    <location>
        <begin position="24"/>
        <end position="26"/>
    </location>
</feature>
<feature type="strand" evidence="4">
    <location>
        <begin position="28"/>
        <end position="32"/>
    </location>
</feature>
<protein>
    <recommendedName>
        <fullName>Jingzhaotoxin F7-10.36</fullName>
    </recommendedName>
    <alternativeName>
        <fullName>Peptide F7-10.36</fullName>
    </alternativeName>
</protein>
<accession>P0CH54</accession>
<name>JZ710_CHIGU</name>
<sequence>SCKVPFNECKYGADECCKGYVCSKRDGWCKYHIN</sequence>
<evidence type="ECO:0000250" key="1"/>
<evidence type="ECO:0000269" key="2">
    <source>
    </source>
</evidence>
<evidence type="ECO:0000305" key="3"/>
<evidence type="ECO:0007829" key="4">
    <source>
        <dbReference type="PDB" id="8FD4"/>
    </source>
</evidence>
<proteinExistence type="evidence at protein level"/>